<protein>
    <recommendedName>
        <fullName>Cytochrome P450 52C1</fullName>
        <ecNumber>1.14.14.-</ecNumber>
    </recommendedName>
    <alternativeName>
        <fullName>Alkane-inducible P450-ALK7</fullName>
    </alternativeName>
    <alternativeName>
        <fullName>CYPLIIC1</fullName>
    </alternativeName>
</protein>
<accession>P30612</accession>
<comment type="function">
    <text>Together with an NADPH cytochrome P450 the enzyme system catalyzes the terminal hydroxylation as the first step in the assimilation of alkanes and fatty acids.</text>
</comment>
<comment type="cofactor">
    <cofactor evidence="1">
        <name>heme</name>
        <dbReference type="ChEBI" id="CHEBI:30413"/>
    </cofactor>
</comment>
<comment type="subcellular location">
    <subcellularLocation>
        <location evidence="3">Membrane</location>
    </subcellularLocation>
    <subcellularLocation>
        <location>Membrane</location>
        <topology>Single-pass membrane protein</topology>
    </subcellularLocation>
</comment>
<comment type="induction">
    <text>By various alkanes.</text>
</comment>
<comment type="similarity">
    <text evidence="3">Belongs to the cytochrome P450 family.</text>
</comment>
<proteinExistence type="evidence at transcript level"/>
<reference key="1">
    <citation type="journal article" date="1992" name="DNA Cell Biol.">
        <title>Identification and characterization of additional members of the cytochrome P450 multigene family CYP52 of Candida tropicalis.</title>
        <authorList>
            <person name="Seghezzi W."/>
            <person name="Meili C."/>
            <person name="Ruffiner R."/>
            <person name="Kuenzi R."/>
            <person name="Sanglard D."/>
            <person name="Fiechter A."/>
        </authorList>
    </citation>
    <scope>NUCLEOTIDE SEQUENCE [GENOMIC DNA]</scope>
    <source>
        <strain>ATCC 750 / CBS 94 / DSM 11953 / JCM 1541 / NBRC 1400</strain>
    </source>
</reference>
<keyword id="KW-0349">Heme</keyword>
<keyword id="KW-0408">Iron</keyword>
<keyword id="KW-0472">Membrane</keyword>
<keyword id="KW-0479">Metal-binding</keyword>
<keyword id="KW-0503">Monooxygenase</keyword>
<keyword id="KW-0560">Oxidoreductase</keyword>
<keyword id="KW-0812">Transmembrane</keyword>
<keyword id="KW-1133">Transmembrane helix</keyword>
<feature type="chain" id="PRO_0000052033" description="Cytochrome P450 52C1">
    <location>
        <begin position="1"/>
        <end position="505"/>
    </location>
</feature>
<feature type="transmembrane region" description="Helical" evidence="2">
    <location>
        <begin position="4"/>
        <end position="21"/>
    </location>
</feature>
<feature type="binding site" description="axial binding residue" evidence="1">
    <location>
        <position position="453"/>
    </location>
    <ligand>
        <name>heme</name>
        <dbReference type="ChEBI" id="CHEBI:30413"/>
    </ligand>
    <ligandPart>
        <name>Fe</name>
        <dbReference type="ChEBI" id="CHEBI:18248"/>
    </ligandPart>
</feature>
<dbReference type="EC" id="1.14.14.-"/>
<dbReference type="EMBL" id="Z13014">
    <property type="protein sequence ID" value="CAA78358.1"/>
    <property type="molecule type" value="Genomic_DNA"/>
</dbReference>
<dbReference type="PIR" id="S22976">
    <property type="entry name" value="S22976"/>
</dbReference>
<dbReference type="SMR" id="P30612"/>
<dbReference type="VEuPathDB" id="FungiDB:CTMYA2_060220"/>
<dbReference type="VEuPathDB" id="FungiDB:CTRG_04959"/>
<dbReference type="GO" id="GO:0016020">
    <property type="term" value="C:membrane"/>
    <property type="evidence" value="ECO:0007669"/>
    <property type="project" value="UniProtKB-SubCell"/>
</dbReference>
<dbReference type="GO" id="GO:0020037">
    <property type="term" value="F:heme binding"/>
    <property type="evidence" value="ECO:0007669"/>
    <property type="project" value="InterPro"/>
</dbReference>
<dbReference type="GO" id="GO:0005506">
    <property type="term" value="F:iron ion binding"/>
    <property type="evidence" value="ECO:0007669"/>
    <property type="project" value="InterPro"/>
</dbReference>
<dbReference type="GO" id="GO:0016712">
    <property type="term" value="F:oxidoreductase activity, acting on paired donors, with incorporation or reduction of molecular oxygen, reduced flavin or flavoprotein as one donor, and incorporation of one atom of oxygen"/>
    <property type="evidence" value="ECO:0007669"/>
    <property type="project" value="InterPro"/>
</dbReference>
<dbReference type="CDD" id="cd11063">
    <property type="entry name" value="CYP52"/>
    <property type="match status" value="1"/>
</dbReference>
<dbReference type="Gene3D" id="1.10.630.10">
    <property type="entry name" value="Cytochrome P450"/>
    <property type="match status" value="1"/>
</dbReference>
<dbReference type="InterPro" id="IPR001128">
    <property type="entry name" value="Cyt_P450"/>
</dbReference>
<dbReference type="InterPro" id="IPR017972">
    <property type="entry name" value="Cyt_P450_CS"/>
</dbReference>
<dbReference type="InterPro" id="IPR002974">
    <property type="entry name" value="Cyt_P450_E_CYP52_ascomycetes"/>
</dbReference>
<dbReference type="InterPro" id="IPR047146">
    <property type="entry name" value="Cyt_P450_E_CYP52_fungi"/>
</dbReference>
<dbReference type="InterPro" id="IPR002402">
    <property type="entry name" value="Cyt_P450_E_grp-II"/>
</dbReference>
<dbReference type="InterPro" id="IPR036396">
    <property type="entry name" value="Cyt_P450_sf"/>
</dbReference>
<dbReference type="PANTHER" id="PTHR24287">
    <property type="entry name" value="P450, PUTATIVE (EUROFUNG)-RELATED"/>
    <property type="match status" value="1"/>
</dbReference>
<dbReference type="PANTHER" id="PTHR24287:SF1">
    <property type="entry name" value="P450, PUTATIVE (EUROFUNG)-RELATED"/>
    <property type="match status" value="1"/>
</dbReference>
<dbReference type="Pfam" id="PF00067">
    <property type="entry name" value="p450"/>
    <property type="match status" value="1"/>
</dbReference>
<dbReference type="PRINTS" id="PR00464">
    <property type="entry name" value="EP450II"/>
</dbReference>
<dbReference type="PRINTS" id="PR01239">
    <property type="entry name" value="EP450IICYP52"/>
</dbReference>
<dbReference type="PRINTS" id="PR00385">
    <property type="entry name" value="P450"/>
</dbReference>
<dbReference type="SUPFAM" id="SSF48264">
    <property type="entry name" value="Cytochrome P450"/>
    <property type="match status" value="1"/>
</dbReference>
<dbReference type="PROSITE" id="PS00086">
    <property type="entry name" value="CYTOCHROME_P450"/>
    <property type="match status" value="1"/>
</dbReference>
<evidence type="ECO:0000250" key="1"/>
<evidence type="ECO:0000255" key="2"/>
<evidence type="ECO:0000305" key="3"/>
<gene>
    <name type="primary">CYP52C1</name>
</gene>
<name>CP52P_CANTR</name>
<organism>
    <name type="scientific">Candida tropicalis</name>
    <name type="common">Yeast</name>
    <dbReference type="NCBI Taxonomy" id="5482"/>
    <lineage>
        <taxon>Eukaryota</taxon>
        <taxon>Fungi</taxon>
        <taxon>Dikarya</taxon>
        <taxon>Ascomycota</taxon>
        <taxon>Saccharomycotina</taxon>
        <taxon>Pichiomycetes</taxon>
        <taxon>Debaryomycetaceae</taxon>
        <taxon>Candida/Lodderomyces clade</taxon>
        <taxon>Candida</taxon>
    </lineage>
</organism>
<sequence length="505" mass="58094">MYQLFCFLAGIIVVYKAAQYYKRRTLVTKFHCKPARISPNKSWLEYLGIASVVHADEMIRKGGLYSEIDGRFKSLDVSTFKSITLGKTTYVTKDIENIRHILSATEMNSWNLGARPIALRPFIGDGIFASEGQSWKHSRIMLRPVFAKEHVKQITSMEPYVQLLIKIIKNHEGEPLEFQTLAHLFTIDYSTDFLLGESCDSLKDFLGEESNSTLDTSLRLAFASQFNKTQQQMTIRFMLGKLAFLMYPKSFQYSIQMQKDFVDVYIDRVVGMSEEELNNHPKSYVLLYQLARQTKNRDILQDELMSILLAGRDTTASLLTFLFFELSHHPEVFNKLKEEIERHFPDVESVTFGTIQRCDYLQWCINETMRLHPSVPFNFRTAANDTVIPRGGGKSCTDPILVHKGEQVLFSFYSVNREEKYFGTNTDKFAPERWSESLRRTEFIPFSAGPRACLGQQLPRVEASYVTIRLLQTFHGLHNASKQYPPNRVVAATMRLTDGCNVCFI</sequence>